<name>ARP4_SCHPO</name>
<protein>
    <recommendedName>
        <fullName>Actin-related protein 4</fullName>
    </recommendedName>
    <alternativeName>
        <fullName>Actin-like protein arp4</fullName>
        <shortName>Actin-like protein 4</shortName>
    </alternativeName>
    <alternativeName>
        <fullName>Altered polarity protein 5</fullName>
    </alternativeName>
</protein>
<accession>Q9P7X7</accession>
<feature type="chain" id="PRO_0000089100" description="Actin-related protein 4">
    <location>
        <begin position="1"/>
        <end position="433"/>
    </location>
</feature>
<feature type="region of interest" description="Disordered" evidence="2">
    <location>
        <begin position="289"/>
        <end position="317"/>
    </location>
</feature>
<feature type="compositionally biased region" description="Polar residues" evidence="2">
    <location>
        <begin position="302"/>
        <end position="317"/>
    </location>
</feature>
<keyword id="KW-0010">Activator</keyword>
<keyword id="KW-0156">Chromatin regulator</keyword>
<keyword id="KW-0227">DNA damage</keyword>
<keyword id="KW-0234">DNA repair</keyword>
<keyword id="KW-0539">Nucleus</keyword>
<keyword id="KW-1185">Reference proteome</keyword>
<keyword id="KW-0804">Transcription</keyword>
<keyword id="KW-0805">Transcription regulation</keyword>
<sequence length="433" mass="48773">MTSAFYGGDEVSAIVIDPGSKWTRIGFSGEDIPKCVLPSYCGEFSDGRRLFGEEYIYKSNPGMEIKNAIRNGWVENWDVTVDLWRYGLEQQLKTNPLEHPILITEPFDNPPENRVKTLETMFESLRCPATYLAKQETCAAFASGKGTACLVDIGAERSSVSAIYDGFVLQKGYQVQHFSGNAINDILAQTLRDKNFEVMPKYLVKSKNPVEIGQPANCELRPRDTTDSYHQFQVQRVYDEWKEECALISDVPFSSETTIAESEFEFPDGSRMMFGAERYQIPEHLFVPGSDEEMNEEPSKPIEQTENNEVSQQDSSVTNTSSRILGIPQLFQNCISECDVDIRASLLNNVIVCGGTSLMQGFSLRLQNELSKLYPGSRLKIHASGHVVERSYASWLGGSILSSLGTFHQLWISRQEYEEHGSDRLALIEKRCK</sequence>
<proteinExistence type="inferred from homology"/>
<organism>
    <name type="scientific">Schizosaccharomyces pombe (strain 972 / ATCC 24843)</name>
    <name type="common">Fission yeast</name>
    <dbReference type="NCBI Taxonomy" id="284812"/>
    <lineage>
        <taxon>Eukaryota</taxon>
        <taxon>Fungi</taxon>
        <taxon>Dikarya</taxon>
        <taxon>Ascomycota</taxon>
        <taxon>Taphrinomycotina</taxon>
        <taxon>Schizosaccharomycetes</taxon>
        <taxon>Schizosaccharomycetales</taxon>
        <taxon>Schizosaccharomycetaceae</taxon>
        <taxon>Schizosaccharomyces</taxon>
    </lineage>
</organism>
<dbReference type="EMBL" id="CU329671">
    <property type="protein sequence ID" value="CAB66436.1"/>
    <property type="molecule type" value="Genomic_DNA"/>
</dbReference>
<dbReference type="PIR" id="T50395">
    <property type="entry name" value="T50395"/>
</dbReference>
<dbReference type="RefSeq" id="NP_595820.1">
    <property type="nucleotide sequence ID" value="NM_001021724.2"/>
</dbReference>
<dbReference type="SMR" id="Q9P7X7"/>
<dbReference type="BioGRID" id="277830">
    <property type="interactions" value="23"/>
</dbReference>
<dbReference type="FunCoup" id="Q9P7X7">
    <property type="interactions" value="196"/>
</dbReference>
<dbReference type="IntAct" id="Q9P7X7">
    <property type="interactions" value="1"/>
</dbReference>
<dbReference type="MINT" id="Q9P7X7"/>
<dbReference type="STRING" id="284812.Q9P7X7"/>
<dbReference type="iPTMnet" id="Q9P7X7"/>
<dbReference type="PaxDb" id="4896-SPBP23A10.08.1"/>
<dbReference type="EnsemblFungi" id="SPBP23A10.08.1">
    <property type="protein sequence ID" value="SPBP23A10.08.1:pep"/>
    <property type="gene ID" value="SPBP23A10.08"/>
</dbReference>
<dbReference type="GeneID" id="2541318"/>
<dbReference type="KEGG" id="spo:2541318"/>
<dbReference type="PomBase" id="SPBP23A10.08">
    <property type="gene designation" value="alp5"/>
</dbReference>
<dbReference type="VEuPathDB" id="FungiDB:SPBP23A10.08"/>
<dbReference type="eggNOG" id="KOG0679">
    <property type="taxonomic scope" value="Eukaryota"/>
</dbReference>
<dbReference type="HOGENOM" id="CLU_027965_6_2_1"/>
<dbReference type="InParanoid" id="Q9P7X7"/>
<dbReference type="OMA" id="MTEAPWN"/>
<dbReference type="PhylomeDB" id="Q9P7X7"/>
<dbReference type="Reactome" id="R-SPO-3214858">
    <property type="pathway name" value="RMTs methylate histone arginines"/>
</dbReference>
<dbReference type="PRO" id="PR:Q9P7X7"/>
<dbReference type="Proteomes" id="UP000002485">
    <property type="component" value="Chromosome II"/>
</dbReference>
<dbReference type="GO" id="GO:0043189">
    <property type="term" value="C:H4/H2A histone acetyltransferase complex"/>
    <property type="evidence" value="ECO:0000314"/>
    <property type="project" value="PomBase"/>
</dbReference>
<dbReference type="GO" id="GO:0031011">
    <property type="term" value="C:Ino80 complex"/>
    <property type="evidence" value="ECO:0000314"/>
    <property type="project" value="PomBase"/>
</dbReference>
<dbReference type="GO" id="GO:0035267">
    <property type="term" value="C:NuA4 histone acetyltransferase complex"/>
    <property type="evidence" value="ECO:0000314"/>
    <property type="project" value="PomBase"/>
</dbReference>
<dbReference type="GO" id="GO:0005634">
    <property type="term" value="C:nucleus"/>
    <property type="evidence" value="ECO:0000314"/>
    <property type="project" value="PomBase"/>
</dbReference>
<dbReference type="GO" id="GO:0000812">
    <property type="term" value="C:Swr1 complex"/>
    <property type="evidence" value="ECO:0000314"/>
    <property type="project" value="PomBase"/>
</dbReference>
<dbReference type="GO" id="GO:0003682">
    <property type="term" value="F:chromatin binding"/>
    <property type="evidence" value="ECO:0000318"/>
    <property type="project" value="GO_Central"/>
</dbReference>
<dbReference type="GO" id="GO:0006338">
    <property type="term" value="P:chromatin remodeling"/>
    <property type="evidence" value="ECO:0000314"/>
    <property type="project" value="PomBase"/>
</dbReference>
<dbReference type="GO" id="GO:0006281">
    <property type="term" value="P:DNA repair"/>
    <property type="evidence" value="ECO:0007669"/>
    <property type="project" value="UniProtKB-KW"/>
</dbReference>
<dbReference type="GO" id="GO:0140861">
    <property type="term" value="P:DNA repair-dependent chromatin remodeling"/>
    <property type="evidence" value="ECO:0000305"/>
    <property type="project" value="PomBase"/>
</dbReference>
<dbReference type="GO" id="GO:0006357">
    <property type="term" value="P:regulation of transcription by RNA polymerase II"/>
    <property type="evidence" value="ECO:0000318"/>
    <property type="project" value="GO_Central"/>
</dbReference>
<dbReference type="GO" id="GO:0045815">
    <property type="term" value="P:transcription initiation-coupled chromatin remodeling"/>
    <property type="evidence" value="ECO:0000305"/>
    <property type="project" value="PomBase"/>
</dbReference>
<dbReference type="CDD" id="cd13395">
    <property type="entry name" value="ASKHA_NBD_Arp4_ACTL6-like"/>
    <property type="match status" value="1"/>
</dbReference>
<dbReference type="FunFam" id="3.30.420.40:FF:000289">
    <property type="entry name" value="Actin-related protein 4"/>
    <property type="match status" value="1"/>
</dbReference>
<dbReference type="FunFam" id="3.30.420.40:FF:000184">
    <property type="entry name" value="NuA4 histone acetyltransferase subunit"/>
    <property type="match status" value="1"/>
</dbReference>
<dbReference type="FunFam" id="3.30.420.40:FF:000058">
    <property type="entry name" value="Putative actin-related protein 5"/>
    <property type="match status" value="1"/>
</dbReference>
<dbReference type="Gene3D" id="3.30.420.40">
    <property type="match status" value="3"/>
</dbReference>
<dbReference type="Gene3D" id="3.90.640.10">
    <property type="entry name" value="Actin, Chain A, domain 4"/>
    <property type="match status" value="1"/>
</dbReference>
<dbReference type="InterPro" id="IPR004000">
    <property type="entry name" value="Actin"/>
</dbReference>
<dbReference type="InterPro" id="IPR004001">
    <property type="entry name" value="Actin_CS"/>
</dbReference>
<dbReference type="InterPro" id="IPR043129">
    <property type="entry name" value="ATPase_NBD"/>
</dbReference>
<dbReference type="PANTHER" id="PTHR11937">
    <property type="entry name" value="ACTIN"/>
    <property type="match status" value="1"/>
</dbReference>
<dbReference type="Pfam" id="PF00022">
    <property type="entry name" value="Actin"/>
    <property type="match status" value="1"/>
</dbReference>
<dbReference type="SMART" id="SM00268">
    <property type="entry name" value="ACTIN"/>
    <property type="match status" value="1"/>
</dbReference>
<dbReference type="SUPFAM" id="SSF53067">
    <property type="entry name" value="Actin-like ATPase domain"/>
    <property type="match status" value="2"/>
</dbReference>
<dbReference type="PROSITE" id="PS00432">
    <property type="entry name" value="ACTINS_2"/>
    <property type="match status" value="1"/>
</dbReference>
<evidence type="ECO:0000250" key="1"/>
<evidence type="ECO:0000256" key="2">
    <source>
        <dbReference type="SAM" id="MobiDB-lite"/>
    </source>
</evidence>
<evidence type="ECO:0000305" key="3"/>
<gene>
    <name type="primary">alp5</name>
    <name type="synonym">arp4</name>
    <name type="ORF">SPBP23A10.08</name>
</gene>
<comment type="function">
    <text evidence="1">Chromatin interaction component of the NuA4 histone acetyltransferase complex which is involved in transcriptional activation of selected genes principally by acetylation of nucleosomal histone H4 and H2A. The NuA4 complex is also involved in DNA repair. Is required for NuA4 complex integrity. Component of the SWR1 complex which mediates the ATP-dependent exchange of histone H2A for the H2A variant HZT1 leading to transcriptional regulation of selected genes by chromatin remodeling. Component of the INO80 complex which remodels chromatin by shifting nucleosomes and is involved in DNA repair (By similarity).</text>
</comment>
<comment type="subunit">
    <text evidence="1">Component of the NuA4 histone acetyltransferase complex, of the INO80 chromatin remodeling complex, and of the SWR1 chromatin remodeling complex.</text>
</comment>
<comment type="subcellular location">
    <subcellularLocation>
        <location evidence="1">Nucleus</location>
    </subcellularLocation>
</comment>
<comment type="similarity">
    <text evidence="3">Belongs to the actin family. ARP4 subfamily.</text>
</comment>
<reference key="1">
    <citation type="journal article" date="2002" name="Nature">
        <title>The genome sequence of Schizosaccharomyces pombe.</title>
        <authorList>
            <person name="Wood V."/>
            <person name="Gwilliam R."/>
            <person name="Rajandream M.A."/>
            <person name="Lyne M.H."/>
            <person name="Lyne R."/>
            <person name="Stewart A."/>
            <person name="Sgouros J.G."/>
            <person name="Peat N."/>
            <person name="Hayles J."/>
            <person name="Baker S.G."/>
            <person name="Basham D."/>
            <person name="Bowman S."/>
            <person name="Brooks K."/>
            <person name="Brown D."/>
            <person name="Brown S."/>
            <person name="Chillingworth T."/>
            <person name="Churcher C.M."/>
            <person name="Collins M."/>
            <person name="Connor R."/>
            <person name="Cronin A."/>
            <person name="Davis P."/>
            <person name="Feltwell T."/>
            <person name="Fraser A."/>
            <person name="Gentles S."/>
            <person name="Goble A."/>
            <person name="Hamlin N."/>
            <person name="Harris D.E."/>
            <person name="Hidalgo J."/>
            <person name="Hodgson G."/>
            <person name="Holroyd S."/>
            <person name="Hornsby T."/>
            <person name="Howarth S."/>
            <person name="Huckle E.J."/>
            <person name="Hunt S."/>
            <person name="Jagels K."/>
            <person name="James K.D."/>
            <person name="Jones L."/>
            <person name="Jones M."/>
            <person name="Leather S."/>
            <person name="McDonald S."/>
            <person name="McLean J."/>
            <person name="Mooney P."/>
            <person name="Moule S."/>
            <person name="Mungall K.L."/>
            <person name="Murphy L.D."/>
            <person name="Niblett D."/>
            <person name="Odell C."/>
            <person name="Oliver K."/>
            <person name="O'Neil S."/>
            <person name="Pearson D."/>
            <person name="Quail M.A."/>
            <person name="Rabbinowitsch E."/>
            <person name="Rutherford K.M."/>
            <person name="Rutter S."/>
            <person name="Saunders D."/>
            <person name="Seeger K."/>
            <person name="Sharp S."/>
            <person name="Skelton J."/>
            <person name="Simmonds M.N."/>
            <person name="Squares R."/>
            <person name="Squares S."/>
            <person name="Stevens K."/>
            <person name="Taylor K."/>
            <person name="Taylor R.G."/>
            <person name="Tivey A."/>
            <person name="Walsh S.V."/>
            <person name="Warren T."/>
            <person name="Whitehead S."/>
            <person name="Woodward J.R."/>
            <person name="Volckaert G."/>
            <person name="Aert R."/>
            <person name="Robben J."/>
            <person name="Grymonprez B."/>
            <person name="Weltjens I."/>
            <person name="Vanstreels E."/>
            <person name="Rieger M."/>
            <person name="Schaefer M."/>
            <person name="Mueller-Auer S."/>
            <person name="Gabel C."/>
            <person name="Fuchs M."/>
            <person name="Duesterhoeft A."/>
            <person name="Fritzc C."/>
            <person name="Holzer E."/>
            <person name="Moestl D."/>
            <person name="Hilbert H."/>
            <person name="Borzym K."/>
            <person name="Langer I."/>
            <person name="Beck A."/>
            <person name="Lehrach H."/>
            <person name="Reinhardt R."/>
            <person name="Pohl T.M."/>
            <person name="Eger P."/>
            <person name="Zimmermann W."/>
            <person name="Wedler H."/>
            <person name="Wambutt R."/>
            <person name="Purnelle B."/>
            <person name="Goffeau A."/>
            <person name="Cadieu E."/>
            <person name="Dreano S."/>
            <person name="Gloux S."/>
            <person name="Lelaure V."/>
            <person name="Mottier S."/>
            <person name="Galibert F."/>
            <person name="Aves S.J."/>
            <person name="Xiang Z."/>
            <person name="Hunt C."/>
            <person name="Moore K."/>
            <person name="Hurst S.M."/>
            <person name="Lucas M."/>
            <person name="Rochet M."/>
            <person name="Gaillardin C."/>
            <person name="Tallada V.A."/>
            <person name="Garzon A."/>
            <person name="Thode G."/>
            <person name="Daga R.R."/>
            <person name="Cruzado L."/>
            <person name="Jimenez J."/>
            <person name="Sanchez M."/>
            <person name="del Rey F."/>
            <person name="Benito J."/>
            <person name="Dominguez A."/>
            <person name="Revuelta J.L."/>
            <person name="Moreno S."/>
            <person name="Armstrong J."/>
            <person name="Forsburg S.L."/>
            <person name="Cerutti L."/>
            <person name="Lowe T."/>
            <person name="McCombie W.R."/>
            <person name="Paulsen I."/>
            <person name="Potashkin J."/>
            <person name="Shpakovski G.V."/>
            <person name="Ussery D."/>
            <person name="Barrell B.G."/>
            <person name="Nurse P."/>
        </authorList>
    </citation>
    <scope>NUCLEOTIDE SEQUENCE [LARGE SCALE GENOMIC DNA]</scope>
    <source>
        <strain>972 / ATCC 24843</strain>
    </source>
</reference>